<organism>
    <name type="scientific">Brucella melitensis biotype 1 (strain ATCC 23456 / CCUG 17765 / NCTC 10094 / 16M)</name>
    <dbReference type="NCBI Taxonomy" id="224914"/>
    <lineage>
        <taxon>Bacteria</taxon>
        <taxon>Pseudomonadati</taxon>
        <taxon>Pseudomonadota</taxon>
        <taxon>Alphaproteobacteria</taxon>
        <taxon>Hyphomicrobiales</taxon>
        <taxon>Brucellaceae</taxon>
        <taxon>Brucella/Ochrobactrum group</taxon>
        <taxon>Brucella</taxon>
    </lineage>
</organism>
<sequence>MALDIKICGLKTPEAVAAALDGGATHIGFIFFPKSPRHITPDAAARLRAAATGRAVAVAVTVDADDEALDEIVKTVRPDMLQLHGGETPERVRFLKERYNLPVMKAFSIREAGDLEAIAPYRGIADRFLFDAKPPKGSELPGGNGISFDWNLLAALDADIDYMLSGGLNADNIAEALLKTGAPGIDISSGVECAPGEKDVRLIENFFQAVADANAQPFARRA</sequence>
<name>TRPF_BRUME</name>
<keyword id="KW-0028">Amino-acid biosynthesis</keyword>
<keyword id="KW-0057">Aromatic amino acid biosynthesis</keyword>
<keyword id="KW-0413">Isomerase</keyword>
<keyword id="KW-0822">Tryptophan biosynthesis</keyword>
<dbReference type="EC" id="5.3.1.24" evidence="1"/>
<dbReference type="EMBL" id="AE008917">
    <property type="protein sequence ID" value="AAL53198.1"/>
    <property type="status" value="ALT_INIT"/>
    <property type="molecule type" value="Genomic_DNA"/>
</dbReference>
<dbReference type="PIR" id="AC3504">
    <property type="entry name" value="AC3504"/>
</dbReference>
<dbReference type="RefSeq" id="WP_002965175.1">
    <property type="nucleotide sequence ID" value="NZ_GG703778.1"/>
</dbReference>
<dbReference type="SMR" id="P67003"/>
<dbReference type="KEGG" id="bme:BMEI2017"/>
<dbReference type="KEGG" id="bmel:DK63_1475"/>
<dbReference type="PATRIC" id="fig|224914.52.peg.1553"/>
<dbReference type="eggNOG" id="COG0135">
    <property type="taxonomic scope" value="Bacteria"/>
</dbReference>
<dbReference type="PhylomeDB" id="P67003"/>
<dbReference type="UniPathway" id="UPA00035">
    <property type="reaction ID" value="UER00042"/>
</dbReference>
<dbReference type="Proteomes" id="UP000000419">
    <property type="component" value="Chromosome I"/>
</dbReference>
<dbReference type="GO" id="GO:0004640">
    <property type="term" value="F:phosphoribosylanthranilate isomerase activity"/>
    <property type="evidence" value="ECO:0007669"/>
    <property type="project" value="UniProtKB-UniRule"/>
</dbReference>
<dbReference type="GO" id="GO:0000162">
    <property type="term" value="P:L-tryptophan biosynthetic process"/>
    <property type="evidence" value="ECO:0007669"/>
    <property type="project" value="UniProtKB-UniRule"/>
</dbReference>
<dbReference type="CDD" id="cd00405">
    <property type="entry name" value="PRAI"/>
    <property type="match status" value="1"/>
</dbReference>
<dbReference type="Gene3D" id="3.20.20.70">
    <property type="entry name" value="Aldolase class I"/>
    <property type="match status" value="1"/>
</dbReference>
<dbReference type="HAMAP" id="MF_00135">
    <property type="entry name" value="PRAI"/>
    <property type="match status" value="1"/>
</dbReference>
<dbReference type="InterPro" id="IPR013785">
    <property type="entry name" value="Aldolase_TIM"/>
</dbReference>
<dbReference type="InterPro" id="IPR001240">
    <property type="entry name" value="PRAI_dom"/>
</dbReference>
<dbReference type="InterPro" id="IPR011060">
    <property type="entry name" value="RibuloseP-bd_barrel"/>
</dbReference>
<dbReference type="InterPro" id="IPR044643">
    <property type="entry name" value="TrpF_fam"/>
</dbReference>
<dbReference type="NCBIfam" id="NF002295">
    <property type="entry name" value="PRK01222.1-1"/>
    <property type="match status" value="1"/>
</dbReference>
<dbReference type="PANTHER" id="PTHR42894">
    <property type="entry name" value="N-(5'-PHOSPHORIBOSYL)ANTHRANILATE ISOMERASE"/>
    <property type="match status" value="1"/>
</dbReference>
<dbReference type="PANTHER" id="PTHR42894:SF1">
    <property type="entry name" value="N-(5'-PHOSPHORIBOSYL)ANTHRANILATE ISOMERASE"/>
    <property type="match status" value="1"/>
</dbReference>
<dbReference type="Pfam" id="PF00697">
    <property type="entry name" value="PRAI"/>
    <property type="match status" value="1"/>
</dbReference>
<dbReference type="SUPFAM" id="SSF51366">
    <property type="entry name" value="Ribulose-phoshate binding barrel"/>
    <property type="match status" value="1"/>
</dbReference>
<protein>
    <recommendedName>
        <fullName evidence="1">N-(5'-phosphoribosyl)anthranilate isomerase</fullName>
        <shortName evidence="1">PRAI</shortName>
        <ecNumber evidence="1">5.3.1.24</ecNumber>
    </recommendedName>
</protein>
<proteinExistence type="inferred from homology"/>
<evidence type="ECO:0000255" key="1">
    <source>
        <dbReference type="HAMAP-Rule" id="MF_00135"/>
    </source>
</evidence>
<evidence type="ECO:0000305" key="2"/>
<gene>
    <name evidence="1" type="primary">trpF</name>
    <name type="ordered locus">BMEI2017</name>
</gene>
<feature type="chain" id="PRO_0000154348" description="N-(5'-phosphoribosyl)anthranilate isomerase">
    <location>
        <begin position="1"/>
        <end position="222"/>
    </location>
</feature>
<reference key="1">
    <citation type="journal article" date="2002" name="Proc. Natl. Acad. Sci. U.S.A.">
        <title>The genome sequence of the facultative intracellular pathogen Brucella melitensis.</title>
        <authorList>
            <person name="DelVecchio V.G."/>
            <person name="Kapatral V."/>
            <person name="Redkar R.J."/>
            <person name="Patra G."/>
            <person name="Mujer C."/>
            <person name="Los T."/>
            <person name="Ivanova N."/>
            <person name="Anderson I."/>
            <person name="Bhattacharyya A."/>
            <person name="Lykidis A."/>
            <person name="Reznik G."/>
            <person name="Jablonski L."/>
            <person name="Larsen N."/>
            <person name="D'Souza M."/>
            <person name="Bernal A."/>
            <person name="Mazur M."/>
            <person name="Goltsman E."/>
            <person name="Selkov E."/>
            <person name="Elzer P.H."/>
            <person name="Hagius S."/>
            <person name="O'Callaghan D."/>
            <person name="Letesson J.-J."/>
            <person name="Haselkorn R."/>
            <person name="Kyrpides N.C."/>
            <person name="Overbeek R."/>
        </authorList>
    </citation>
    <scope>NUCLEOTIDE SEQUENCE [LARGE SCALE GENOMIC DNA]</scope>
    <source>
        <strain>ATCC 23456 / CCUG 17765 / NCTC 10094 / 16M</strain>
    </source>
</reference>
<accession>P67003</accession>
<accession>Q8FXY3</accession>
<accession>Q8YE61</accession>
<comment type="catalytic activity">
    <reaction evidence="1">
        <text>N-(5-phospho-beta-D-ribosyl)anthranilate = 1-(2-carboxyphenylamino)-1-deoxy-D-ribulose 5-phosphate</text>
        <dbReference type="Rhea" id="RHEA:21540"/>
        <dbReference type="ChEBI" id="CHEBI:18277"/>
        <dbReference type="ChEBI" id="CHEBI:58613"/>
        <dbReference type="EC" id="5.3.1.24"/>
    </reaction>
</comment>
<comment type="pathway">
    <text evidence="1">Amino-acid biosynthesis; L-tryptophan biosynthesis; L-tryptophan from chorismate: step 3/5.</text>
</comment>
<comment type="similarity">
    <text evidence="1">Belongs to the TrpF family.</text>
</comment>
<comment type="sequence caution" evidence="2">
    <conflict type="erroneous initiation">
        <sequence resource="EMBL-CDS" id="AAL53198"/>
    </conflict>
</comment>